<keyword id="KW-0436">Ligase</keyword>
<keyword id="KW-0597">Phosphoprotein</keyword>
<keyword id="KW-0662">Pyridine nucleotide biosynthesis</keyword>
<comment type="function">
    <text evidence="1">Catalyzes the synthesis of beta-nicotinate D-ribonucleotide from nicotinate and 5-phospho-D-ribose 1-phosphate at the expense of ATP.</text>
</comment>
<comment type="catalytic activity">
    <reaction evidence="1">
        <text>nicotinate + 5-phospho-alpha-D-ribose 1-diphosphate + ATP + H2O = nicotinate beta-D-ribonucleotide + ADP + phosphate + diphosphate</text>
        <dbReference type="Rhea" id="RHEA:36163"/>
        <dbReference type="ChEBI" id="CHEBI:15377"/>
        <dbReference type="ChEBI" id="CHEBI:30616"/>
        <dbReference type="ChEBI" id="CHEBI:32544"/>
        <dbReference type="ChEBI" id="CHEBI:33019"/>
        <dbReference type="ChEBI" id="CHEBI:43474"/>
        <dbReference type="ChEBI" id="CHEBI:57502"/>
        <dbReference type="ChEBI" id="CHEBI:58017"/>
        <dbReference type="ChEBI" id="CHEBI:456216"/>
        <dbReference type="EC" id="6.3.4.21"/>
    </reaction>
</comment>
<comment type="pathway">
    <text evidence="1">Cofactor biosynthesis; NAD(+) biosynthesis; nicotinate D-ribonucleotide from nicotinate: step 1/1.</text>
</comment>
<comment type="PTM">
    <text evidence="1">Transiently phosphorylated on a His residue during the reaction cycle. Phosphorylation strongly increases the affinity for substrates and increases the rate of nicotinate D-ribonucleotide production. Dephosphorylation regenerates the low-affinity form of the enzyme, leading to product release.</text>
</comment>
<comment type="similarity">
    <text evidence="1">Belongs to the NAPRTase family.</text>
</comment>
<proteinExistence type="inferred from homology"/>
<name>PNCB_VIBVY</name>
<feature type="chain" id="PRO_0000205850" description="Nicotinate phosphoribosyltransferase">
    <location>
        <begin position="1"/>
        <end position="437"/>
    </location>
</feature>
<feature type="modified residue" description="Phosphohistidine; by autocatalysis" evidence="1">
    <location>
        <position position="231"/>
    </location>
</feature>
<sequence length="437" mass="49946">MCAPLFQPAIIQSVLDLDVYKINMMQAAYRFYPQTQVRYELIVRSDDNLSDLVEEVREEINRLAELRFDAAQLAYLAEKAPYLTAEFLSYLETFRFHPQQQVSVGIFRTAQGDCQLRVTINGIWHETILYETLVMSIISELRNRRYWAQIPQSQLHKVLEDKLDFLDSELKRRNITNFRFSEMGTRRRFSFAAQKTMLDVLRARVPELLLGTSNYHLAQEFNLTPIGTVAHEWTMAHQALVAVQHSQCVALDKWLEAFNGSLGIALTDTIGIDAFLSDFDLEKATAYAGVRHDSGSPFVWGDKIIAHYESLGIDPSTKTLIFTDGLDFARALDICEYFAGRAQISFGIGTFLANDMGNWTNDKGIRYQPISMVVKMAECNGSPVAKISDEPEKAMCEDIFFLMNLKQRFGLEVDLDKAIETLKQMKRQQKKRIQSVA</sequence>
<evidence type="ECO:0000255" key="1">
    <source>
        <dbReference type="HAMAP-Rule" id="MF_00570"/>
    </source>
</evidence>
<gene>
    <name evidence="1" type="primary">pncB</name>
    <name type="ordered locus">VV1969</name>
</gene>
<reference key="1">
    <citation type="journal article" date="2003" name="Genome Res.">
        <title>Comparative genome analysis of Vibrio vulnificus, a marine pathogen.</title>
        <authorList>
            <person name="Chen C.-Y."/>
            <person name="Wu K.-M."/>
            <person name="Chang Y.-C."/>
            <person name="Chang C.-H."/>
            <person name="Tsai H.-C."/>
            <person name="Liao T.-L."/>
            <person name="Liu Y.-M."/>
            <person name="Chen H.-J."/>
            <person name="Shen A.B.-T."/>
            <person name="Li J.-C."/>
            <person name="Su T.-L."/>
            <person name="Shao C.-P."/>
            <person name="Lee C.-T."/>
            <person name="Hor L.-I."/>
            <person name="Tsai S.-F."/>
        </authorList>
    </citation>
    <scope>NUCLEOTIDE SEQUENCE [LARGE SCALE GENOMIC DNA]</scope>
    <source>
        <strain>YJ016</strain>
    </source>
</reference>
<protein>
    <recommendedName>
        <fullName evidence="1">Nicotinate phosphoribosyltransferase</fullName>
        <shortName evidence="1">NAPRTase</shortName>
        <ecNumber evidence="1">6.3.4.21</ecNumber>
    </recommendedName>
</protein>
<accession>Q7MK41</accession>
<organism>
    <name type="scientific">Vibrio vulnificus (strain YJ016)</name>
    <dbReference type="NCBI Taxonomy" id="196600"/>
    <lineage>
        <taxon>Bacteria</taxon>
        <taxon>Pseudomonadati</taxon>
        <taxon>Pseudomonadota</taxon>
        <taxon>Gammaproteobacteria</taxon>
        <taxon>Vibrionales</taxon>
        <taxon>Vibrionaceae</taxon>
        <taxon>Vibrio</taxon>
    </lineage>
</organism>
<dbReference type="EC" id="6.3.4.21" evidence="1"/>
<dbReference type="EMBL" id="BA000037">
    <property type="protein sequence ID" value="BAC94733.1"/>
    <property type="molecule type" value="Genomic_DNA"/>
</dbReference>
<dbReference type="RefSeq" id="WP_011150519.1">
    <property type="nucleotide sequence ID" value="NC_005139.1"/>
</dbReference>
<dbReference type="SMR" id="Q7MK41"/>
<dbReference type="STRING" id="672.VV93_v1c17290"/>
<dbReference type="KEGG" id="vvy:VV1969"/>
<dbReference type="PATRIC" id="fig|196600.6.peg.1997"/>
<dbReference type="eggNOG" id="COG1488">
    <property type="taxonomic scope" value="Bacteria"/>
</dbReference>
<dbReference type="HOGENOM" id="CLU_030991_1_0_6"/>
<dbReference type="UniPathway" id="UPA00253">
    <property type="reaction ID" value="UER00457"/>
</dbReference>
<dbReference type="Proteomes" id="UP000002675">
    <property type="component" value="Chromosome I"/>
</dbReference>
<dbReference type="GO" id="GO:0005829">
    <property type="term" value="C:cytosol"/>
    <property type="evidence" value="ECO:0007669"/>
    <property type="project" value="TreeGrafter"/>
</dbReference>
<dbReference type="GO" id="GO:0004516">
    <property type="term" value="F:nicotinate phosphoribosyltransferase activity"/>
    <property type="evidence" value="ECO:0007669"/>
    <property type="project" value="UniProtKB-UniRule"/>
</dbReference>
<dbReference type="GO" id="GO:0034355">
    <property type="term" value="P:NAD biosynthetic process via the salvage pathway"/>
    <property type="evidence" value="ECO:0007669"/>
    <property type="project" value="TreeGrafter"/>
</dbReference>
<dbReference type="CDD" id="cd01401">
    <property type="entry name" value="PncB_like"/>
    <property type="match status" value="1"/>
</dbReference>
<dbReference type="Gene3D" id="3.20.140.10">
    <property type="entry name" value="nicotinate phosphoribosyltransferase"/>
    <property type="match status" value="1"/>
</dbReference>
<dbReference type="HAMAP" id="MF_00570">
    <property type="entry name" value="NAPRTase"/>
    <property type="match status" value="1"/>
</dbReference>
<dbReference type="InterPro" id="IPR041525">
    <property type="entry name" value="N/Namide_PRibTrfase"/>
</dbReference>
<dbReference type="InterPro" id="IPR040727">
    <property type="entry name" value="NAPRTase_N"/>
</dbReference>
<dbReference type="InterPro" id="IPR006406">
    <property type="entry name" value="Nic_PRibTrfase"/>
</dbReference>
<dbReference type="InterPro" id="IPR007229">
    <property type="entry name" value="Nic_PRibTrfase-Fam"/>
</dbReference>
<dbReference type="InterPro" id="IPR036068">
    <property type="entry name" value="Nicotinate_pribotase-like_C"/>
</dbReference>
<dbReference type="NCBIfam" id="TIGR01514">
    <property type="entry name" value="NAPRTase"/>
    <property type="match status" value="1"/>
</dbReference>
<dbReference type="NCBIfam" id="NF003704">
    <property type="entry name" value="PRK05321.1"/>
    <property type="match status" value="1"/>
</dbReference>
<dbReference type="PANTHER" id="PTHR11098">
    <property type="entry name" value="NICOTINATE PHOSPHORIBOSYLTRANSFERASE"/>
    <property type="match status" value="1"/>
</dbReference>
<dbReference type="PANTHER" id="PTHR11098:SF1">
    <property type="entry name" value="NICOTINATE PHOSPHORIBOSYLTRANSFERASE"/>
    <property type="match status" value="1"/>
</dbReference>
<dbReference type="Pfam" id="PF04095">
    <property type="entry name" value="NAPRTase"/>
    <property type="match status" value="1"/>
</dbReference>
<dbReference type="Pfam" id="PF17767">
    <property type="entry name" value="NAPRTase_N"/>
    <property type="match status" value="1"/>
</dbReference>
<dbReference type="PIRSF" id="PIRSF000484">
    <property type="entry name" value="NAPRT"/>
    <property type="match status" value="1"/>
</dbReference>
<dbReference type="SUPFAM" id="SSF51690">
    <property type="entry name" value="Nicotinate/Quinolinate PRTase C-terminal domain-like"/>
    <property type="match status" value="1"/>
</dbReference>
<dbReference type="SUPFAM" id="SSF54675">
    <property type="entry name" value="Nicotinate/Quinolinate PRTase N-terminal domain-like"/>
    <property type="match status" value="1"/>
</dbReference>